<comment type="function">
    <text evidence="1">Seems to be required for the assembly of the photosystem I complex.</text>
</comment>
<comment type="subcellular location">
    <subcellularLocation>
        <location evidence="1">Plastid</location>
        <location evidence="1">Chloroplast thylakoid membrane</location>
        <topology evidence="1">Multi-pass membrane protein</topology>
    </subcellularLocation>
</comment>
<comment type="similarity">
    <text evidence="1">Belongs to the Ycf4 family.</text>
</comment>
<protein>
    <recommendedName>
        <fullName evidence="1">Photosystem I assembly protein Ycf4</fullName>
    </recommendedName>
</protein>
<feature type="chain" id="PRO_0000217597" description="Photosystem I assembly protein Ycf4">
    <location>
        <begin position="1"/>
        <end position="185"/>
    </location>
</feature>
<feature type="transmembrane region" description="Helical" evidence="1">
    <location>
        <begin position="21"/>
        <end position="43"/>
    </location>
</feature>
<feature type="transmembrane region" description="Helical" evidence="1">
    <location>
        <begin position="63"/>
        <end position="85"/>
    </location>
</feature>
<name>YCF4_BRAOL</name>
<accession>Q31910</accession>
<proteinExistence type="inferred from homology"/>
<dbReference type="EMBL" id="U34204">
    <property type="protein sequence ID" value="AAB05669.1"/>
    <property type="molecule type" value="Genomic_DNA"/>
</dbReference>
<dbReference type="PIR" id="T14523">
    <property type="entry name" value="T14523"/>
</dbReference>
<dbReference type="GO" id="GO:0009535">
    <property type="term" value="C:chloroplast thylakoid membrane"/>
    <property type="evidence" value="ECO:0007669"/>
    <property type="project" value="UniProtKB-SubCell"/>
</dbReference>
<dbReference type="GO" id="GO:0009522">
    <property type="term" value="C:photosystem I"/>
    <property type="evidence" value="ECO:0007669"/>
    <property type="project" value="InterPro"/>
</dbReference>
<dbReference type="GO" id="GO:0015979">
    <property type="term" value="P:photosynthesis"/>
    <property type="evidence" value="ECO:0007669"/>
    <property type="project" value="UniProtKB-UniRule"/>
</dbReference>
<dbReference type="HAMAP" id="MF_00437">
    <property type="entry name" value="Ycf4"/>
    <property type="match status" value="1"/>
</dbReference>
<dbReference type="InterPro" id="IPR003359">
    <property type="entry name" value="PSI_Ycf4_assembly"/>
</dbReference>
<dbReference type="PANTHER" id="PTHR33288">
    <property type="match status" value="1"/>
</dbReference>
<dbReference type="PANTHER" id="PTHR33288:SF4">
    <property type="entry name" value="PHOTOSYSTEM I ASSEMBLY PROTEIN YCF4"/>
    <property type="match status" value="1"/>
</dbReference>
<dbReference type="Pfam" id="PF02392">
    <property type="entry name" value="Ycf4"/>
    <property type="match status" value="1"/>
</dbReference>
<keyword id="KW-0150">Chloroplast</keyword>
<keyword id="KW-0472">Membrane</keyword>
<keyword id="KW-0602">Photosynthesis</keyword>
<keyword id="KW-0934">Plastid</keyword>
<keyword id="KW-0793">Thylakoid</keyword>
<keyword id="KW-0812">Transmembrane</keyword>
<keyword id="KW-1133">Transmembrane helix</keyword>
<sequence>MTWRSEHIWIDLISGSRKKSNFCWAFLLFLGSLGFVLVGTSSYLGRNLISSFPPQQITFFPQGLVMSFYGIAGLFISCYLWCTILWNVGSGYDLFDRKEGIVRIFRWGFPGKSRRIVLRFLMKDIQSDRTEVKEGVSARRVPYMEIRGQGAIPLIRTDENFTTRREIEQKAAELAYFLRVPIEVF</sequence>
<gene>
    <name evidence="1" type="primary">ycf4</name>
</gene>
<organism>
    <name type="scientific">Brassica oleracea</name>
    <name type="common">Wild cabbage</name>
    <dbReference type="NCBI Taxonomy" id="3712"/>
    <lineage>
        <taxon>Eukaryota</taxon>
        <taxon>Viridiplantae</taxon>
        <taxon>Streptophyta</taxon>
        <taxon>Embryophyta</taxon>
        <taxon>Tracheophyta</taxon>
        <taxon>Spermatophyta</taxon>
        <taxon>Magnoliopsida</taxon>
        <taxon>eudicotyledons</taxon>
        <taxon>Gunneridae</taxon>
        <taxon>Pentapetalae</taxon>
        <taxon>rosids</taxon>
        <taxon>malvids</taxon>
        <taxon>Brassicales</taxon>
        <taxon>Brassicaceae</taxon>
        <taxon>Brassiceae</taxon>
        <taxon>Brassica</taxon>
    </lineage>
</organism>
<reference key="1">
    <citation type="submission" date="1996-08" db="EMBL/GenBank/DDBJ databases">
        <authorList>
            <person name="Stange J.L."/>
            <person name="Dzelzkalns V.A."/>
        </authorList>
    </citation>
    <scope>NUCLEOTIDE SEQUENCE [GENOMIC DNA]</scope>
    <source>
        <tissue>Leaf</tissue>
    </source>
</reference>
<geneLocation type="chloroplast"/>
<evidence type="ECO:0000255" key="1">
    <source>
        <dbReference type="HAMAP-Rule" id="MF_00437"/>
    </source>
</evidence>